<feature type="chain" id="PRO_0000126134" description="CENP-B homolog protein 1">
    <location>
        <begin position="1"/>
        <end position="514"/>
    </location>
</feature>
<feature type="domain" description="HTH CENPB-type" evidence="1">
    <location>
        <begin position="69"/>
        <end position="144"/>
    </location>
</feature>
<feature type="sequence conflict" description="In Ref. 1; AAB80698." evidence="3" ref="1">
    <original>I</original>
    <variation>M</variation>
    <location>
        <position position="168"/>
    </location>
</feature>
<organism>
    <name type="scientific">Schizosaccharomyces pombe (strain 972 / ATCC 24843)</name>
    <name type="common">Fission yeast</name>
    <dbReference type="NCBI Taxonomy" id="284812"/>
    <lineage>
        <taxon>Eukaryota</taxon>
        <taxon>Fungi</taxon>
        <taxon>Dikarya</taxon>
        <taxon>Ascomycota</taxon>
        <taxon>Taphrinomycotina</taxon>
        <taxon>Schizosaccharomycetes</taxon>
        <taxon>Schizosaccharomycetales</taxon>
        <taxon>Schizosaccharomycetaceae</taxon>
        <taxon>Schizosaccharomyces</taxon>
    </lineage>
</organism>
<gene>
    <name type="primary">cbh1</name>
    <name type="synonym">cbh</name>
    <name type="ORF">SPAC9E9.10c</name>
</gene>
<dbReference type="EMBL" id="U86754">
    <property type="protein sequence ID" value="AAB80698.1"/>
    <property type="molecule type" value="mRNA"/>
</dbReference>
<dbReference type="EMBL" id="CU329670">
    <property type="protein sequence ID" value="CAB16408.1"/>
    <property type="molecule type" value="Genomic_DNA"/>
</dbReference>
<dbReference type="PIR" id="T39217">
    <property type="entry name" value="T39217"/>
</dbReference>
<dbReference type="RefSeq" id="NP_594583.1">
    <property type="nucleotide sequence ID" value="NM_001020012.2"/>
</dbReference>
<dbReference type="SMR" id="O14423"/>
<dbReference type="BioGRID" id="279715">
    <property type="interactions" value="81"/>
</dbReference>
<dbReference type="FunCoup" id="O14423">
    <property type="interactions" value="288"/>
</dbReference>
<dbReference type="IntAct" id="O14423">
    <property type="interactions" value="3"/>
</dbReference>
<dbReference type="STRING" id="284812.O14423"/>
<dbReference type="iPTMnet" id="O14423"/>
<dbReference type="PaxDb" id="4896-SPAC9E9.10c.1"/>
<dbReference type="EnsemblFungi" id="SPAC9E9.10c.1">
    <property type="protein sequence ID" value="SPAC9E9.10c.1:pep"/>
    <property type="gene ID" value="SPAC9E9.10c"/>
</dbReference>
<dbReference type="GeneID" id="2543290"/>
<dbReference type="KEGG" id="spo:2543290"/>
<dbReference type="PomBase" id="SPAC9E9.10c">
    <property type="gene designation" value="cbh1"/>
</dbReference>
<dbReference type="VEuPathDB" id="FungiDB:SPAC9E9.10c"/>
<dbReference type="eggNOG" id="KOG3105">
    <property type="taxonomic scope" value="Eukaryota"/>
</dbReference>
<dbReference type="HOGENOM" id="CLU_018294_0_3_1"/>
<dbReference type="InParanoid" id="O14423"/>
<dbReference type="OMA" id="WIKTEWP"/>
<dbReference type="PhylomeDB" id="O14423"/>
<dbReference type="PRO" id="PR:O14423"/>
<dbReference type="Proteomes" id="UP000002485">
    <property type="component" value="Chromosome I"/>
</dbReference>
<dbReference type="GO" id="GO:0000785">
    <property type="term" value="C:chromatin"/>
    <property type="evidence" value="ECO:0000303"/>
    <property type="project" value="PomBase"/>
</dbReference>
<dbReference type="GO" id="GO:0000779">
    <property type="term" value="C:condensed chromosome, centromeric region"/>
    <property type="evidence" value="ECO:0000314"/>
    <property type="project" value="PomBase"/>
</dbReference>
<dbReference type="GO" id="GO:0005634">
    <property type="term" value="C:nucleus"/>
    <property type="evidence" value="ECO:0007005"/>
    <property type="project" value="PomBase"/>
</dbReference>
<dbReference type="GO" id="GO:0019237">
    <property type="term" value="F:centromeric DNA binding"/>
    <property type="evidence" value="ECO:0000314"/>
    <property type="project" value="PomBase"/>
</dbReference>
<dbReference type="GO" id="GO:0003677">
    <property type="term" value="F:DNA binding"/>
    <property type="evidence" value="ECO:0000318"/>
    <property type="project" value="GO_Central"/>
</dbReference>
<dbReference type="FunFam" id="1.10.10.60:FF:000313">
    <property type="entry name" value="major centromere autoantigen B"/>
    <property type="match status" value="1"/>
</dbReference>
<dbReference type="Gene3D" id="1.10.10.60">
    <property type="entry name" value="Homeodomain-like"/>
    <property type="match status" value="2"/>
</dbReference>
<dbReference type="InterPro" id="IPR050863">
    <property type="entry name" value="CenT-Element_Derived"/>
</dbReference>
<dbReference type="InterPro" id="IPR004875">
    <property type="entry name" value="DDE_SF_endonuclease_dom"/>
</dbReference>
<dbReference type="InterPro" id="IPR009057">
    <property type="entry name" value="Homeodomain-like_sf"/>
</dbReference>
<dbReference type="InterPro" id="IPR041188">
    <property type="entry name" value="HTH_ABP1_N"/>
</dbReference>
<dbReference type="InterPro" id="IPR006600">
    <property type="entry name" value="HTH_CenpB_DNA-bd_dom"/>
</dbReference>
<dbReference type="PANTHER" id="PTHR19303:SF73">
    <property type="entry name" value="PROTEIN PDC2"/>
    <property type="match status" value="1"/>
</dbReference>
<dbReference type="PANTHER" id="PTHR19303">
    <property type="entry name" value="TRANSPOSON"/>
    <property type="match status" value="1"/>
</dbReference>
<dbReference type="Pfam" id="PF03184">
    <property type="entry name" value="DDE_1"/>
    <property type="match status" value="1"/>
</dbReference>
<dbReference type="Pfam" id="PF18107">
    <property type="entry name" value="HTH_ABP1_N"/>
    <property type="match status" value="1"/>
</dbReference>
<dbReference type="Pfam" id="PF03221">
    <property type="entry name" value="HTH_Tnp_Tc5"/>
    <property type="match status" value="1"/>
</dbReference>
<dbReference type="SMART" id="SM00674">
    <property type="entry name" value="CENPB"/>
    <property type="match status" value="1"/>
</dbReference>
<dbReference type="SUPFAM" id="SSF46689">
    <property type="entry name" value="Homeodomain-like"/>
    <property type="match status" value="2"/>
</dbReference>
<dbReference type="PROSITE" id="PS51253">
    <property type="entry name" value="HTH_CENPB"/>
    <property type="match status" value="1"/>
</dbReference>
<comment type="function">
    <text evidence="2">Binds to centromeric K-type repeat DNA and ARS3002 DNA. The CBH-binding consensus sequence is Py-Pu-A-T-A-T-Py-Pu-T-A.</text>
</comment>
<comment type="subcellular location">
    <subcellularLocation>
        <location>Nucleus</location>
    </subcellularLocation>
    <subcellularLocation>
        <location>Chromosome</location>
        <location>Centromere</location>
    </subcellularLocation>
</comment>
<name>CBH1_SCHPO</name>
<accession>O14423</accession>
<accession>O14294</accession>
<proteinExistence type="evidence at protein level"/>
<keyword id="KW-0137">Centromere</keyword>
<keyword id="KW-0158">Chromosome</keyword>
<keyword id="KW-0903">Direct protein sequencing</keyword>
<keyword id="KW-0238">DNA-binding</keyword>
<keyword id="KW-0539">Nucleus</keyword>
<keyword id="KW-1185">Reference proteome</keyword>
<sequence>MPPIRQAVSLAEKKAIRDYYNQSAHRIPQKEVTEWFRKTYNKDLSQSTISEILSPKYSYLDDGSVRLGDIKKIRAPKFPLLDNAVYEWLQQREVEGLPISGDMIKQAATRFWSKIPAYASLPLPDFSNGWLDKFRRRHYIQQSAVNQALESIKFEVFREYPVHIQEFIRPYAQKDIFCVGGTSLFWKLTPNKQNLDYQEIQGMKRGKAKVSLIMCCNADGSERLPLWIVGYAQNPRSFEQCGIFPKSMNFEWKWNGRASISPIIMEEWLRWFDTRMQGRKVLLMLESNDTYQFGVESVRRFKGGFQNTSVFRIPEKTLDIKSPFEQGIVDTFKANYRRYWLQYSLNQINILRDPLKAVNVLKAIRWMLWSWNFGVSEKTIQASFLRSGLLGPHSEAEGQGMESYQKAIMEIGNLISSKGSEAVKQINEYIRPSEEDETKLHQDAVDTVAAEFLEERRFESDEEEDVEPQISNVEAAMAFEVLIKYFEQHENGDPSFVLDLYRRQRVIAPNNLIA</sequence>
<protein>
    <recommendedName>
        <fullName>CENP-B homolog protein 1</fullName>
        <shortName>CBHP-1</shortName>
    </recommendedName>
</protein>
<evidence type="ECO:0000255" key="1">
    <source>
        <dbReference type="PROSITE-ProRule" id="PRU00583"/>
    </source>
</evidence>
<evidence type="ECO:0000269" key="2">
    <source>
    </source>
</evidence>
<evidence type="ECO:0000305" key="3"/>
<reference key="1">
    <citation type="journal article" date="1997" name="Proc. Natl. Acad. Sci. U.S.A.">
        <title>Purification and characterization of a CENP-B homologue protein that binds to the centromeric K-type repeat DNA of Schizosaccharomyces pombe.</title>
        <authorList>
            <person name="Lee J.-K."/>
            <person name="Huberman J.A."/>
            <person name="Hurwitz J."/>
        </authorList>
    </citation>
    <scope>NUCLEOTIDE SEQUENCE [MRNA]</scope>
    <scope>PARTIAL PROTEIN SEQUENCE</scope>
    <scope>FUNCTION</scope>
    <source>
        <strain>972 / ATCC 24843</strain>
    </source>
</reference>
<reference key="2">
    <citation type="journal article" date="2002" name="Nature">
        <title>The genome sequence of Schizosaccharomyces pombe.</title>
        <authorList>
            <person name="Wood V."/>
            <person name="Gwilliam R."/>
            <person name="Rajandream M.A."/>
            <person name="Lyne M.H."/>
            <person name="Lyne R."/>
            <person name="Stewart A."/>
            <person name="Sgouros J.G."/>
            <person name="Peat N."/>
            <person name="Hayles J."/>
            <person name="Baker S.G."/>
            <person name="Basham D."/>
            <person name="Bowman S."/>
            <person name="Brooks K."/>
            <person name="Brown D."/>
            <person name="Brown S."/>
            <person name="Chillingworth T."/>
            <person name="Churcher C.M."/>
            <person name="Collins M."/>
            <person name="Connor R."/>
            <person name="Cronin A."/>
            <person name="Davis P."/>
            <person name="Feltwell T."/>
            <person name="Fraser A."/>
            <person name="Gentles S."/>
            <person name="Goble A."/>
            <person name="Hamlin N."/>
            <person name="Harris D.E."/>
            <person name="Hidalgo J."/>
            <person name="Hodgson G."/>
            <person name="Holroyd S."/>
            <person name="Hornsby T."/>
            <person name="Howarth S."/>
            <person name="Huckle E.J."/>
            <person name="Hunt S."/>
            <person name="Jagels K."/>
            <person name="James K.D."/>
            <person name="Jones L."/>
            <person name="Jones M."/>
            <person name="Leather S."/>
            <person name="McDonald S."/>
            <person name="McLean J."/>
            <person name="Mooney P."/>
            <person name="Moule S."/>
            <person name="Mungall K.L."/>
            <person name="Murphy L.D."/>
            <person name="Niblett D."/>
            <person name="Odell C."/>
            <person name="Oliver K."/>
            <person name="O'Neil S."/>
            <person name="Pearson D."/>
            <person name="Quail M.A."/>
            <person name="Rabbinowitsch E."/>
            <person name="Rutherford K.M."/>
            <person name="Rutter S."/>
            <person name="Saunders D."/>
            <person name="Seeger K."/>
            <person name="Sharp S."/>
            <person name="Skelton J."/>
            <person name="Simmonds M.N."/>
            <person name="Squares R."/>
            <person name="Squares S."/>
            <person name="Stevens K."/>
            <person name="Taylor K."/>
            <person name="Taylor R.G."/>
            <person name="Tivey A."/>
            <person name="Walsh S.V."/>
            <person name="Warren T."/>
            <person name="Whitehead S."/>
            <person name="Woodward J.R."/>
            <person name="Volckaert G."/>
            <person name="Aert R."/>
            <person name="Robben J."/>
            <person name="Grymonprez B."/>
            <person name="Weltjens I."/>
            <person name="Vanstreels E."/>
            <person name="Rieger M."/>
            <person name="Schaefer M."/>
            <person name="Mueller-Auer S."/>
            <person name="Gabel C."/>
            <person name="Fuchs M."/>
            <person name="Duesterhoeft A."/>
            <person name="Fritzc C."/>
            <person name="Holzer E."/>
            <person name="Moestl D."/>
            <person name="Hilbert H."/>
            <person name="Borzym K."/>
            <person name="Langer I."/>
            <person name="Beck A."/>
            <person name="Lehrach H."/>
            <person name="Reinhardt R."/>
            <person name="Pohl T.M."/>
            <person name="Eger P."/>
            <person name="Zimmermann W."/>
            <person name="Wedler H."/>
            <person name="Wambutt R."/>
            <person name="Purnelle B."/>
            <person name="Goffeau A."/>
            <person name="Cadieu E."/>
            <person name="Dreano S."/>
            <person name="Gloux S."/>
            <person name="Lelaure V."/>
            <person name="Mottier S."/>
            <person name="Galibert F."/>
            <person name="Aves S.J."/>
            <person name="Xiang Z."/>
            <person name="Hunt C."/>
            <person name="Moore K."/>
            <person name="Hurst S.M."/>
            <person name="Lucas M."/>
            <person name="Rochet M."/>
            <person name="Gaillardin C."/>
            <person name="Tallada V.A."/>
            <person name="Garzon A."/>
            <person name="Thode G."/>
            <person name="Daga R.R."/>
            <person name="Cruzado L."/>
            <person name="Jimenez J."/>
            <person name="Sanchez M."/>
            <person name="del Rey F."/>
            <person name="Benito J."/>
            <person name="Dominguez A."/>
            <person name="Revuelta J.L."/>
            <person name="Moreno S."/>
            <person name="Armstrong J."/>
            <person name="Forsburg S.L."/>
            <person name="Cerutti L."/>
            <person name="Lowe T."/>
            <person name="McCombie W.R."/>
            <person name="Paulsen I."/>
            <person name="Potashkin J."/>
            <person name="Shpakovski G.V."/>
            <person name="Ussery D."/>
            <person name="Barrell B.G."/>
            <person name="Nurse P."/>
        </authorList>
    </citation>
    <scope>NUCLEOTIDE SEQUENCE [LARGE SCALE GENOMIC DNA]</scope>
    <source>
        <strain>972 / ATCC 24843</strain>
    </source>
</reference>